<organism>
    <name type="scientific">Brucella abortus biovar 1 (strain 9-941)</name>
    <dbReference type="NCBI Taxonomy" id="262698"/>
    <lineage>
        <taxon>Bacteria</taxon>
        <taxon>Pseudomonadati</taxon>
        <taxon>Pseudomonadota</taxon>
        <taxon>Alphaproteobacteria</taxon>
        <taxon>Hyphomicrobiales</taxon>
        <taxon>Brucellaceae</taxon>
        <taxon>Brucella/Ochrobactrum group</taxon>
        <taxon>Brucella</taxon>
    </lineage>
</organism>
<sequence>MLGKARELANYQDEPEQLPTGSFGKNAFLRLGFERRPERTVLATLHRRAPLIVQQALYWDEGMPTLPCVSIISNAGGILQGDRYAIEIDLEPDTQAHVTTQSATRIQEMDANFATQTQTQTITLGANSYLEYIPHPIIPHKHSRFVQQTEVTIHPTATLIYSEVLMAGRKYYGTGELFHYDLFSSKFHAAHTDGTSLFTEKFIVEPARGNVSRLGAMGSFHVFGNLILLTPKTHADRLFETIDPVFDMDEGIAWGASRLPNDAGLLFKVLGMESAPVRAAIRKIWEAARQEVTGASLPENFLWA</sequence>
<protein>
    <recommendedName>
        <fullName>Urease accessory protein UreD 2</fullName>
    </recommendedName>
</protein>
<comment type="function">
    <text evidence="1">Required for maturation of urease via the functional incorporation of the urease nickel metallocenter.</text>
</comment>
<comment type="subunit">
    <text evidence="1">UreD, UreF and UreG form a complex that acts as a GTP-hydrolysis-dependent molecular chaperone, activating the urease apoprotein by helping to assemble the nickel containing metallocenter of UreC. The UreE protein probably delivers the nickel (By similarity).</text>
</comment>
<comment type="subcellular location">
    <subcellularLocation>
        <location evidence="1">Cytoplasm</location>
    </subcellularLocation>
</comment>
<comment type="similarity">
    <text evidence="2">Belongs to the UreD family.</text>
</comment>
<name>URED2_BRUAB</name>
<gene>
    <name type="primary">ureD2</name>
    <name type="synonym">ureD-2</name>
    <name type="ordered locus">BruAb1_1359</name>
</gene>
<reference key="1">
    <citation type="journal article" date="2005" name="J. Bacteriol.">
        <title>Completion of the genome sequence of Brucella abortus and comparison to the highly similar genomes of Brucella melitensis and Brucella suis.</title>
        <authorList>
            <person name="Halling S.M."/>
            <person name="Peterson-Burch B.D."/>
            <person name="Bricker B.J."/>
            <person name="Zuerner R.L."/>
            <person name="Qing Z."/>
            <person name="Li L.-L."/>
            <person name="Kapur V."/>
            <person name="Alt D.P."/>
            <person name="Olsen S.C."/>
        </authorList>
    </citation>
    <scope>NUCLEOTIDE SEQUENCE [LARGE SCALE GENOMIC DNA]</scope>
    <source>
        <strain>9-941</strain>
    </source>
</reference>
<keyword id="KW-0143">Chaperone</keyword>
<keyword id="KW-0963">Cytoplasm</keyword>
<keyword id="KW-0996">Nickel insertion</keyword>
<proteinExistence type="inferred from homology"/>
<accession>Q57CE4</accession>
<dbReference type="EMBL" id="AE017223">
    <property type="protein sequence ID" value="AAX74690.1"/>
    <property type="molecule type" value="Genomic_DNA"/>
</dbReference>
<dbReference type="RefSeq" id="WP_002964474.1">
    <property type="nucleotide sequence ID" value="NC_006932.1"/>
</dbReference>
<dbReference type="SMR" id="Q57CE4"/>
<dbReference type="EnsemblBacteria" id="AAX74690">
    <property type="protein sequence ID" value="AAX74690"/>
    <property type="gene ID" value="BruAb1_1359"/>
</dbReference>
<dbReference type="KEGG" id="bmb:BruAb1_1359"/>
<dbReference type="HOGENOM" id="CLU_056339_1_0_5"/>
<dbReference type="Proteomes" id="UP000000540">
    <property type="component" value="Chromosome I"/>
</dbReference>
<dbReference type="GO" id="GO:0005737">
    <property type="term" value="C:cytoplasm"/>
    <property type="evidence" value="ECO:0007669"/>
    <property type="project" value="UniProtKB-SubCell"/>
</dbReference>
<dbReference type="GO" id="GO:0016151">
    <property type="term" value="F:nickel cation binding"/>
    <property type="evidence" value="ECO:0007669"/>
    <property type="project" value="UniProtKB-UniRule"/>
</dbReference>
<dbReference type="HAMAP" id="MF_01384">
    <property type="entry name" value="UreD"/>
    <property type="match status" value="1"/>
</dbReference>
<dbReference type="InterPro" id="IPR002669">
    <property type="entry name" value="UreD"/>
</dbReference>
<dbReference type="PANTHER" id="PTHR33643">
    <property type="entry name" value="UREASE ACCESSORY PROTEIN D"/>
    <property type="match status" value="1"/>
</dbReference>
<dbReference type="PANTHER" id="PTHR33643:SF1">
    <property type="entry name" value="UREASE ACCESSORY PROTEIN D"/>
    <property type="match status" value="1"/>
</dbReference>
<dbReference type="Pfam" id="PF01774">
    <property type="entry name" value="UreD"/>
    <property type="match status" value="1"/>
</dbReference>
<evidence type="ECO:0000250" key="1"/>
<evidence type="ECO:0000305" key="2"/>
<feature type="chain" id="PRO_0000340418" description="Urease accessory protein UreD 2">
    <location>
        <begin position="1"/>
        <end position="304"/>
    </location>
</feature>